<evidence type="ECO:0000255" key="1">
    <source>
        <dbReference type="HAMAP-Rule" id="MF_00141"/>
    </source>
</evidence>
<protein>
    <recommendedName>
        <fullName evidence="1">Elongation factor P</fullName>
        <shortName evidence="1">EF-P</shortName>
    </recommendedName>
</protein>
<gene>
    <name evidence="1" type="primary">efp</name>
    <name type="ordered locus">Tery_1313</name>
</gene>
<organism>
    <name type="scientific">Trichodesmium erythraeum (strain IMS101)</name>
    <dbReference type="NCBI Taxonomy" id="203124"/>
    <lineage>
        <taxon>Bacteria</taxon>
        <taxon>Bacillati</taxon>
        <taxon>Cyanobacteriota</taxon>
        <taxon>Cyanophyceae</taxon>
        <taxon>Oscillatoriophycideae</taxon>
        <taxon>Oscillatoriales</taxon>
        <taxon>Microcoleaceae</taxon>
        <taxon>Trichodesmium</taxon>
    </lineage>
</organism>
<dbReference type="EMBL" id="CP000393">
    <property type="protein sequence ID" value="ABG50638.1"/>
    <property type="molecule type" value="Genomic_DNA"/>
</dbReference>
<dbReference type="RefSeq" id="WP_011611017.1">
    <property type="nucleotide sequence ID" value="NC_008312.1"/>
</dbReference>
<dbReference type="SMR" id="Q116D6"/>
<dbReference type="STRING" id="203124.Tery_1313"/>
<dbReference type="KEGG" id="ter:Tery_1313"/>
<dbReference type="eggNOG" id="COG0231">
    <property type="taxonomic scope" value="Bacteria"/>
</dbReference>
<dbReference type="HOGENOM" id="CLU_074944_0_1_3"/>
<dbReference type="OrthoDB" id="9801844at2"/>
<dbReference type="UniPathway" id="UPA00345"/>
<dbReference type="GO" id="GO:0005737">
    <property type="term" value="C:cytoplasm"/>
    <property type="evidence" value="ECO:0007669"/>
    <property type="project" value="UniProtKB-SubCell"/>
</dbReference>
<dbReference type="GO" id="GO:0003746">
    <property type="term" value="F:translation elongation factor activity"/>
    <property type="evidence" value="ECO:0007669"/>
    <property type="project" value="UniProtKB-UniRule"/>
</dbReference>
<dbReference type="GO" id="GO:0043043">
    <property type="term" value="P:peptide biosynthetic process"/>
    <property type="evidence" value="ECO:0007669"/>
    <property type="project" value="InterPro"/>
</dbReference>
<dbReference type="CDD" id="cd04470">
    <property type="entry name" value="S1_EF-P_repeat_1"/>
    <property type="match status" value="1"/>
</dbReference>
<dbReference type="CDD" id="cd05794">
    <property type="entry name" value="S1_EF-P_repeat_2"/>
    <property type="match status" value="1"/>
</dbReference>
<dbReference type="FunFam" id="2.30.30.30:FF:000003">
    <property type="entry name" value="Elongation factor P"/>
    <property type="match status" value="1"/>
</dbReference>
<dbReference type="FunFam" id="2.40.50.140:FF:000004">
    <property type="entry name" value="Elongation factor P"/>
    <property type="match status" value="1"/>
</dbReference>
<dbReference type="FunFam" id="2.40.50.140:FF:000009">
    <property type="entry name" value="Elongation factor P"/>
    <property type="match status" value="1"/>
</dbReference>
<dbReference type="Gene3D" id="2.30.30.30">
    <property type="match status" value="1"/>
</dbReference>
<dbReference type="Gene3D" id="2.40.50.140">
    <property type="entry name" value="Nucleic acid-binding proteins"/>
    <property type="match status" value="2"/>
</dbReference>
<dbReference type="HAMAP" id="MF_00141">
    <property type="entry name" value="EF_P"/>
    <property type="match status" value="1"/>
</dbReference>
<dbReference type="InterPro" id="IPR015365">
    <property type="entry name" value="Elong-fact-P_C"/>
</dbReference>
<dbReference type="InterPro" id="IPR012340">
    <property type="entry name" value="NA-bd_OB-fold"/>
</dbReference>
<dbReference type="InterPro" id="IPR014722">
    <property type="entry name" value="Rib_uL2_dom2"/>
</dbReference>
<dbReference type="InterPro" id="IPR020599">
    <property type="entry name" value="Transl_elong_fac_P/YeiP"/>
</dbReference>
<dbReference type="InterPro" id="IPR013185">
    <property type="entry name" value="Transl_elong_KOW-like"/>
</dbReference>
<dbReference type="InterPro" id="IPR001059">
    <property type="entry name" value="Transl_elong_P/YeiP_cen"/>
</dbReference>
<dbReference type="InterPro" id="IPR013852">
    <property type="entry name" value="Transl_elong_P/YeiP_CS"/>
</dbReference>
<dbReference type="InterPro" id="IPR011768">
    <property type="entry name" value="Transl_elongation_fac_P"/>
</dbReference>
<dbReference type="InterPro" id="IPR008991">
    <property type="entry name" value="Translation_prot_SH3-like_sf"/>
</dbReference>
<dbReference type="NCBIfam" id="TIGR00038">
    <property type="entry name" value="efp"/>
    <property type="match status" value="1"/>
</dbReference>
<dbReference type="NCBIfam" id="NF001810">
    <property type="entry name" value="PRK00529.1"/>
    <property type="match status" value="1"/>
</dbReference>
<dbReference type="PANTHER" id="PTHR30053">
    <property type="entry name" value="ELONGATION FACTOR P"/>
    <property type="match status" value="1"/>
</dbReference>
<dbReference type="PANTHER" id="PTHR30053:SF12">
    <property type="entry name" value="ELONGATION FACTOR P (EF-P) FAMILY PROTEIN"/>
    <property type="match status" value="1"/>
</dbReference>
<dbReference type="Pfam" id="PF01132">
    <property type="entry name" value="EFP"/>
    <property type="match status" value="1"/>
</dbReference>
<dbReference type="Pfam" id="PF08207">
    <property type="entry name" value="EFP_N"/>
    <property type="match status" value="1"/>
</dbReference>
<dbReference type="Pfam" id="PF09285">
    <property type="entry name" value="Elong-fact-P_C"/>
    <property type="match status" value="1"/>
</dbReference>
<dbReference type="PIRSF" id="PIRSF005901">
    <property type="entry name" value="EF-P"/>
    <property type="match status" value="1"/>
</dbReference>
<dbReference type="SMART" id="SM01185">
    <property type="entry name" value="EFP"/>
    <property type="match status" value="1"/>
</dbReference>
<dbReference type="SMART" id="SM00841">
    <property type="entry name" value="Elong-fact-P_C"/>
    <property type="match status" value="1"/>
</dbReference>
<dbReference type="SUPFAM" id="SSF50249">
    <property type="entry name" value="Nucleic acid-binding proteins"/>
    <property type="match status" value="2"/>
</dbReference>
<dbReference type="SUPFAM" id="SSF50104">
    <property type="entry name" value="Translation proteins SH3-like domain"/>
    <property type="match status" value="1"/>
</dbReference>
<dbReference type="PROSITE" id="PS01275">
    <property type="entry name" value="EFP"/>
    <property type="match status" value="1"/>
</dbReference>
<accession>Q116D6</accession>
<comment type="function">
    <text evidence="1">Involved in peptide bond synthesis. Stimulates efficient translation and peptide-bond synthesis on native or reconstituted 70S ribosomes in vitro. Probably functions indirectly by altering the affinity of the ribosome for aminoacyl-tRNA, thus increasing their reactivity as acceptors for peptidyl transferase.</text>
</comment>
<comment type="pathway">
    <text evidence="1">Protein biosynthesis; polypeptide chain elongation.</text>
</comment>
<comment type="subcellular location">
    <subcellularLocation>
        <location evidence="1">Cytoplasm</location>
    </subcellularLocation>
</comment>
<comment type="similarity">
    <text evidence="1">Belongs to the elongation factor P family.</text>
</comment>
<feature type="chain" id="PRO_1000010894" description="Elongation factor P">
    <location>
        <begin position="1"/>
        <end position="185"/>
    </location>
</feature>
<proteinExistence type="inferred from homology"/>
<keyword id="KW-0963">Cytoplasm</keyword>
<keyword id="KW-0251">Elongation factor</keyword>
<keyword id="KW-0648">Protein biosynthesis</keyword>
<name>EFP_TRIEI</name>
<reference key="1">
    <citation type="journal article" date="2015" name="Proc. Natl. Acad. Sci. U.S.A.">
        <title>Trichodesmium genome maintains abundant, widespread noncoding DNA in situ, despite oligotrophic lifestyle.</title>
        <authorList>
            <person name="Walworth N."/>
            <person name="Pfreundt U."/>
            <person name="Nelson W.C."/>
            <person name="Mincer T."/>
            <person name="Heidelberg J.F."/>
            <person name="Fu F."/>
            <person name="Waterbury J.B."/>
            <person name="Glavina del Rio T."/>
            <person name="Goodwin L."/>
            <person name="Kyrpides N.C."/>
            <person name="Land M.L."/>
            <person name="Woyke T."/>
            <person name="Hutchins D.A."/>
            <person name="Hess W.R."/>
            <person name="Webb E.A."/>
        </authorList>
    </citation>
    <scope>NUCLEOTIDE SEQUENCE [LARGE SCALE GENOMIC DNA]</scope>
    <source>
        <strain>IMS101</strain>
    </source>
</reference>
<sequence>MISSNDFRPGVTIELDGSVWRVVEFLHVKPGKGSAFVRTKLKNVQNGNVVERTFRAGETVPQATLDKRAMQHTYKDSDQFVFMDMETYEETNLSSEQIGERVKYLNEGMEVNVIMWGEQVIEVELPNSVVLEVIETDPGVKGDTATGGSKPATVETGAQIMVPLFISKGERIKIDTRNDSYLGRE</sequence>